<organism>
    <name type="scientific">Escherichia coli (strain K12)</name>
    <dbReference type="NCBI Taxonomy" id="83333"/>
    <lineage>
        <taxon>Bacteria</taxon>
        <taxon>Pseudomonadati</taxon>
        <taxon>Pseudomonadota</taxon>
        <taxon>Gammaproteobacteria</taxon>
        <taxon>Enterobacterales</taxon>
        <taxon>Enterobacteriaceae</taxon>
        <taxon>Escherichia</taxon>
    </lineage>
</organism>
<comment type="catalytic activity">
    <reaction evidence="3">
        <text>D-mannitol 1-phosphate + NAD(+) = beta-D-fructose 6-phosphate + NADH + H(+)</text>
        <dbReference type="Rhea" id="RHEA:19661"/>
        <dbReference type="ChEBI" id="CHEBI:15378"/>
        <dbReference type="ChEBI" id="CHEBI:57540"/>
        <dbReference type="ChEBI" id="CHEBI:57634"/>
        <dbReference type="ChEBI" id="CHEBI:57945"/>
        <dbReference type="ChEBI" id="CHEBI:61381"/>
        <dbReference type="EC" id="1.1.1.17"/>
    </reaction>
    <physiologicalReaction direction="left-to-right" evidence="5">
        <dbReference type="Rhea" id="RHEA:19662"/>
    </physiologicalReaction>
</comment>
<comment type="subunit">
    <text evidence="3">Monomer.</text>
</comment>
<comment type="similarity">
    <text evidence="4">Belongs to the mannitol dehydrogenase family.</text>
</comment>
<name>MTLD_ECOLI</name>
<reference key="1">
    <citation type="journal article" date="1988" name="Mol. Microbiol.">
        <title>Nucleotide sequence of the mannitol (mtl) operon in Escherichia coli.</title>
        <authorList>
            <person name="Davis T."/>
            <person name="Yamada M."/>
            <person name="Elgort M."/>
            <person name="Saier M.H. Jr."/>
        </authorList>
    </citation>
    <scope>NUCLEOTIDE SEQUENCE [GENOMIC DNA]</scope>
    <source>
        <strain>K12</strain>
    </source>
</reference>
<reference key="2">
    <citation type="journal article" date="1990" name="Mol. Microbiol.">
        <title>Corrected sequence of the mannitol (mtl) operon in Escherichia coli.</title>
        <authorList>
            <person name="Jaiang W."/>
            <person name="Wu L.F."/>
            <person name="Tomich J."/>
            <person name="Saier M.H. Jr."/>
            <person name="Nichaus W.G."/>
        </authorList>
    </citation>
    <scope>NUCLEOTIDE SEQUENCE [GENOMIC DNA]</scope>
    <scope>SEQUENCE REVISION</scope>
    <source>
        <strain>K12</strain>
    </source>
</reference>
<reference key="3">
    <citation type="journal article" date="1994" name="Nucleic Acids Res.">
        <title>Analysis of the Escherichia coli genome. V. DNA sequence of the region from 76.0 to 81.5 minutes.</title>
        <authorList>
            <person name="Sofia H.J."/>
            <person name="Burland V."/>
            <person name="Daniels D.L."/>
            <person name="Plunkett G. III"/>
            <person name="Blattner F.R."/>
        </authorList>
    </citation>
    <scope>NUCLEOTIDE SEQUENCE [LARGE SCALE GENOMIC DNA]</scope>
    <source>
        <strain>K12 / MG1655 / ATCC 47076</strain>
    </source>
</reference>
<reference key="4">
    <citation type="journal article" date="1997" name="Science">
        <title>The complete genome sequence of Escherichia coli K-12.</title>
        <authorList>
            <person name="Blattner F.R."/>
            <person name="Plunkett G. III"/>
            <person name="Bloch C.A."/>
            <person name="Perna N.T."/>
            <person name="Burland V."/>
            <person name="Riley M."/>
            <person name="Collado-Vides J."/>
            <person name="Glasner J.D."/>
            <person name="Rode C.K."/>
            <person name="Mayhew G.F."/>
            <person name="Gregor J."/>
            <person name="Davis N.W."/>
            <person name="Kirkpatrick H.A."/>
            <person name="Goeden M.A."/>
            <person name="Rose D.J."/>
            <person name="Mau B."/>
            <person name="Shao Y."/>
        </authorList>
    </citation>
    <scope>NUCLEOTIDE SEQUENCE [LARGE SCALE GENOMIC DNA]</scope>
    <source>
        <strain>K12 / MG1655 / ATCC 47076</strain>
    </source>
</reference>
<reference key="5">
    <citation type="journal article" date="2006" name="Mol. Syst. Biol.">
        <title>Highly accurate genome sequences of Escherichia coli K-12 strains MG1655 and W3110.</title>
        <authorList>
            <person name="Hayashi K."/>
            <person name="Morooka N."/>
            <person name="Yamamoto Y."/>
            <person name="Fujita K."/>
            <person name="Isono K."/>
            <person name="Choi S."/>
            <person name="Ohtsubo E."/>
            <person name="Baba T."/>
            <person name="Wanner B.L."/>
            <person name="Mori H."/>
            <person name="Horiuchi T."/>
        </authorList>
    </citation>
    <scope>NUCLEOTIDE SEQUENCE [LARGE SCALE GENOMIC DNA]</scope>
    <source>
        <strain>K12 / W3110 / ATCC 27325 / DSM 5911</strain>
    </source>
</reference>
<reference key="6">
    <citation type="journal article" date="1994" name="J. Bacteriol.">
        <title>The mannitol repressor (MtlR) of Escherichia coli.</title>
        <authorList>
            <person name="Figge R.M."/>
            <person name="Ramseier T.M."/>
            <person name="Saier M.H. Jr."/>
        </authorList>
    </citation>
    <scope>NUCLEOTIDE SEQUENCE [GENOMIC DNA] OF 369-382</scope>
    <source>
        <strain>K12</strain>
    </source>
</reference>
<reference key="7">
    <citation type="journal article" date="1984" name="J. Bacteriol.">
        <title>Purification and properties of D-mannitol-1-phosphate dehydrogenase and D-glucitol-6-phosphate dehydrogenase from Escherichia coli.</title>
        <authorList>
            <person name="Novotny M.J."/>
            <person name="Reizer J."/>
            <person name="Esch F."/>
            <person name="Saier M.H. Jr."/>
        </authorList>
    </citation>
    <scope>PROTEIN SEQUENCE OF 1-25</scope>
    <scope>CATALYTIC ACTIVITY</scope>
    <scope>SUBUNIT</scope>
</reference>
<reference key="8">
    <citation type="journal article" date="1996" name="Mol. Microbiol.">
        <title>FIS is a regulator of metabolism in Escherichia coli.</title>
        <authorList>
            <person name="Gonzalez-Gil G."/>
            <person name="Bringmann P."/>
            <person name="Kahmann R."/>
        </authorList>
    </citation>
    <scope>PROTEIN SEQUENCE OF 1-15</scope>
</reference>
<reference key="9">
    <citation type="journal article" date="2009" name="Mol. Cell. Proteomics">
        <title>Lysine acetylation is a highly abundant and evolutionarily conserved modification in Escherichia coli.</title>
        <authorList>
            <person name="Zhang J."/>
            <person name="Sprung R."/>
            <person name="Pei J."/>
            <person name="Tan X."/>
            <person name="Kim S."/>
            <person name="Zhu H."/>
            <person name="Liu C.F."/>
            <person name="Grishin N.V."/>
            <person name="Zhao Y."/>
        </authorList>
    </citation>
    <scope>ACETYLATION [LARGE SCALE ANALYSIS] AT LYS-269</scope>
    <scope>IDENTIFICATION BY MASS SPECTROMETRY</scope>
    <source>
        <strain>K12 / JW1106</strain>
        <strain>K12 / MG1655 / ATCC 47076</strain>
    </source>
</reference>
<dbReference type="EC" id="1.1.1.17" evidence="3"/>
<dbReference type="EMBL" id="X51359">
    <property type="protein sequence ID" value="CAA35744.1"/>
    <property type="molecule type" value="Genomic_DNA"/>
</dbReference>
<dbReference type="EMBL" id="U00039">
    <property type="protein sequence ID" value="AAB18577.1"/>
    <property type="molecule type" value="Genomic_DNA"/>
</dbReference>
<dbReference type="EMBL" id="U00096">
    <property type="protein sequence ID" value="AAC76624.1"/>
    <property type="molecule type" value="Genomic_DNA"/>
</dbReference>
<dbReference type="EMBL" id="AP009048">
    <property type="protein sequence ID" value="BAE77693.1"/>
    <property type="molecule type" value="Genomic_DNA"/>
</dbReference>
<dbReference type="EMBL" id="X06794">
    <property type="protein sequence ID" value="CAA29954.1"/>
    <property type="status" value="ALT_SEQ"/>
    <property type="molecule type" value="Genomic_DNA"/>
</dbReference>
<dbReference type="EMBL" id="U03845">
    <property type="protein sequence ID" value="AAA92661.1"/>
    <property type="molecule type" value="Genomic_DNA"/>
</dbReference>
<dbReference type="PIR" id="B65160">
    <property type="entry name" value="B65160"/>
</dbReference>
<dbReference type="RefSeq" id="NP_418057.1">
    <property type="nucleotide sequence ID" value="NC_000913.3"/>
</dbReference>
<dbReference type="RefSeq" id="WP_000645439.1">
    <property type="nucleotide sequence ID" value="NZ_LN832404.1"/>
</dbReference>
<dbReference type="SMR" id="P09424"/>
<dbReference type="BioGRID" id="4261273">
    <property type="interactions" value="15"/>
</dbReference>
<dbReference type="DIP" id="DIP-10268N"/>
<dbReference type="FunCoup" id="P09424">
    <property type="interactions" value="161"/>
</dbReference>
<dbReference type="IntAct" id="P09424">
    <property type="interactions" value="11"/>
</dbReference>
<dbReference type="STRING" id="511145.b3600"/>
<dbReference type="iPTMnet" id="P09424"/>
<dbReference type="jPOST" id="P09424"/>
<dbReference type="PaxDb" id="511145-b3600"/>
<dbReference type="EnsemblBacteria" id="AAC76624">
    <property type="protein sequence ID" value="AAC76624"/>
    <property type="gene ID" value="b3600"/>
</dbReference>
<dbReference type="GeneID" id="948117"/>
<dbReference type="KEGG" id="ecj:JW3574"/>
<dbReference type="KEGG" id="eco:b3600"/>
<dbReference type="KEGG" id="ecoc:C3026_19520"/>
<dbReference type="PATRIC" id="fig|1411691.4.peg.3107"/>
<dbReference type="EchoBASE" id="EB0611"/>
<dbReference type="eggNOG" id="COG0246">
    <property type="taxonomic scope" value="Bacteria"/>
</dbReference>
<dbReference type="HOGENOM" id="CLU_036089_2_0_6"/>
<dbReference type="InParanoid" id="P09424"/>
<dbReference type="OMA" id="APFIERK"/>
<dbReference type="OrthoDB" id="271711at2"/>
<dbReference type="PhylomeDB" id="P09424"/>
<dbReference type="BioCyc" id="EcoCyc:MANNPDEHYDROG-MONOMER"/>
<dbReference type="BioCyc" id="MetaCyc:MANNPDEHYDROG-MONOMER"/>
<dbReference type="BRENDA" id="1.1.1.17">
    <property type="organism ID" value="2026"/>
</dbReference>
<dbReference type="PRO" id="PR:P09424"/>
<dbReference type="Proteomes" id="UP000000625">
    <property type="component" value="Chromosome"/>
</dbReference>
<dbReference type="GO" id="GO:0005829">
    <property type="term" value="C:cytosol"/>
    <property type="evidence" value="ECO:0000314"/>
    <property type="project" value="EcoCyc"/>
</dbReference>
<dbReference type="GO" id="GO:0008926">
    <property type="term" value="F:mannitol-1-phosphate 5-dehydrogenase activity"/>
    <property type="evidence" value="ECO:0000314"/>
    <property type="project" value="EcoCyc"/>
</dbReference>
<dbReference type="GO" id="GO:0019592">
    <property type="term" value="P:mannitol catabolic process"/>
    <property type="evidence" value="ECO:0000315"/>
    <property type="project" value="EcoCyc"/>
</dbReference>
<dbReference type="FunFam" id="1.10.1040.10:FF:000009">
    <property type="entry name" value="Mannitol-1-phosphate 5-dehydrogenase"/>
    <property type="match status" value="1"/>
</dbReference>
<dbReference type="FunFam" id="3.40.50.720:FF:000075">
    <property type="entry name" value="Mannitol-1-phosphate 5-dehydrogenase"/>
    <property type="match status" value="1"/>
</dbReference>
<dbReference type="Gene3D" id="1.10.1040.10">
    <property type="entry name" value="N-(1-d-carboxylethyl)-l-norvaline Dehydrogenase, domain 2"/>
    <property type="match status" value="1"/>
</dbReference>
<dbReference type="Gene3D" id="3.40.50.720">
    <property type="entry name" value="NAD(P)-binding Rossmann-like Domain"/>
    <property type="match status" value="1"/>
</dbReference>
<dbReference type="HAMAP" id="MF_00196">
    <property type="entry name" value="Mannitol_dehydrog"/>
    <property type="match status" value="1"/>
</dbReference>
<dbReference type="InterPro" id="IPR008927">
    <property type="entry name" value="6-PGluconate_DH-like_C_sf"/>
</dbReference>
<dbReference type="InterPro" id="IPR013328">
    <property type="entry name" value="6PGD_dom2"/>
</dbReference>
<dbReference type="InterPro" id="IPR023028">
    <property type="entry name" value="Mannitol_1_phos_5_DH"/>
</dbReference>
<dbReference type="InterPro" id="IPR000669">
    <property type="entry name" value="Mannitol_DH"/>
</dbReference>
<dbReference type="InterPro" id="IPR013118">
    <property type="entry name" value="Mannitol_DH_C"/>
</dbReference>
<dbReference type="InterPro" id="IPR023027">
    <property type="entry name" value="Mannitol_DH_CS"/>
</dbReference>
<dbReference type="InterPro" id="IPR013131">
    <property type="entry name" value="Mannitol_DH_N"/>
</dbReference>
<dbReference type="InterPro" id="IPR036291">
    <property type="entry name" value="NAD(P)-bd_dom_sf"/>
</dbReference>
<dbReference type="NCBIfam" id="NF002646">
    <property type="entry name" value="PRK02318.1-2"/>
    <property type="match status" value="1"/>
</dbReference>
<dbReference type="NCBIfam" id="NF002647">
    <property type="entry name" value="PRK02318.1-3"/>
    <property type="match status" value="1"/>
</dbReference>
<dbReference type="NCBIfam" id="NF002648">
    <property type="entry name" value="PRK02318.1-4"/>
    <property type="match status" value="1"/>
</dbReference>
<dbReference type="NCBIfam" id="NF002650">
    <property type="entry name" value="PRK02318.2-2"/>
    <property type="match status" value="1"/>
</dbReference>
<dbReference type="NCBIfam" id="NF002652">
    <property type="entry name" value="PRK02318.2-5"/>
    <property type="match status" value="1"/>
</dbReference>
<dbReference type="PANTHER" id="PTHR30524:SF0">
    <property type="entry name" value="ALTRONATE OXIDOREDUCTASE-RELATED"/>
    <property type="match status" value="1"/>
</dbReference>
<dbReference type="PANTHER" id="PTHR30524">
    <property type="entry name" value="MANNITOL-1-PHOSPHATE 5-DEHYDROGENASE"/>
    <property type="match status" value="1"/>
</dbReference>
<dbReference type="Pfam" id="PF01232">
    <property type="entry name" value="Mannitol_dh"/>
    <property type="match status" value="1"/>
</dbReference>
<dbReference type="Pfam" id="PF08125">
    <property type="entry name" value="Mannitol_dh_C"/>
    <property type="match status" value="1"/>
</dbReference>
<dbReference type="PRINTS" id="PR00084">
    <property type="entry name" value="MTLDHDRGNASE"/>
</dbReference>
<dbReference type="SUPFAM" id="SSF48179">
    <property type="entry name" value="6-phosphogluconate dehydrogenase C-terminal domain-like"/>
    <property type="match status" value="1"/>
</dbReference>
<dbReference type="SUPFAM" id="SSF51735">
    <property type="entry name" value="NAD(P)-binding Rossmann-fold domains"/>
    <property type="match status" value="1"/>
</dbReference>
<dbReference type="PROSITE" id="PS00974">
    <property type="entry name" value="MANNITOL_DHGENASE"/>
    <property type="match status" value="1"/>
</dbReference>
<protein>
    <recommendedName>
        <fullName>Mannitol-1-phosphate 5-dehydrogenase</fullName>
        <ecNumber evidence="3">1.1.1.17</ecNumber>
    </recommendedName>
</protein>
<feature type="chain" id="PRO_0000170703" description="Mannitol-1-phosphate 5-dehydrogenase">
    <location>
        <begin position="1"/>
        <end position="382"/>
    </location>
</feature>
<feature type="binding site" evidence="1">
    <location>
        <begin position="3"/>
        <end position="14"/>
    </location>
    <ligand>
        <name>NAD(+)</name>
        <dbReference type="ChEBI" id="CHEBI:57540"/>
    </ligand>
</feature>
<feature type="modified residue" description="N6-acetyllysine" evidence="2">
    <location>
        <position position="269"/>
    </location>
</feature>
<feature type="sequence conflict" description="In Ref. 8; AA sequence." evidence="4" ref="8">
    <original>H</original>
    <variation>V</variation>
    <location>
        <position position="5"/>
    </location>
</feature>
<feature type="sequence conflict" description="In Ref. 8; AA sequence." evidence="4" ref="8">
    <original>GF</original>
    <variation>SL</variation>
    <location>
        <begin position="14"/>
        <end position="15"/>
    </location>
</feature>
<feature type="sequence conflict" description="In Ref. 1 and 2." evidence="4" ref="1 2">
    <original>A</original>
    <variation>R</variation>
    <location>
        <position position="86"/>
    </location>
</feature>
<accession>P09424</accession>
<accession>Q2M7R3</accession>
<keyword id="KW-0007">Acetylation</keyword>
<keyword id="KW-0903">Direct protein sequencing</keyword>
<keyword id="KW-0520">NAD</keyword>
<keyword id="KW-0560">Oxidoreductase</keyword>
<keyword id="KW-1185">Reference proteome</keyword>
<sequence length="382" mass="41139">MKALHFGAGNIGRGFIGKLLADAGIQLTFADVNQVVLDALNARHSYQVHVVGETEQVDTVSGVNAVSSIGDDVVDLIAQVDLVTTAVGPVVLERIAPAIAKGQVKRKEQGNESPLNIIACENMVRGTTQLKGHVMNALPEDAKAWVEEHVGFVDSAVDRIVPPSASATNDPLEVTVETFSEWIVDKTQFKGALPNIPGMELTDNLMAFVERKLFTLNTGHAITAYLGKLAGHQTIRDAILDEKIRAVVKGAMEESGAVLIKRYGFDADKHAAYIQKILGRFENPYLKDDVERVGRQPLRKLSAGDRLIKPLLGTLEYGLPHKNLIEGIAAAMHFRSEDDPQAQELAALIADKGPQAALAQISGLDANSEVVSEAVTAYKAMQ</sequence>
<gene>
    <name type="primary">mtlD</name>
    <name type="ordered locus">b3600</name>
    <name type="ordered locus">JW3574</name>
</gene>
<proteinExistence type="evidence at protein level"/>
<evidence type="ECO:0000250" key="1"/>
<evidence type="ECO:0000269" key="2">
    <source>
    </source>
</evidence>
<evidence type="ECO:0000269" key="3">
    <source>
    </source>
</evidence>
<evidence type="ECO:0000305" key="4"/>
<evidence type="ECO:0000305" key="5">
    <source>
    </source>
</evidence>